<proteinExistence type="evidence at transcript level"/>
<comment type="function">
    <text evidence="3 4">Cytokine that acts as a physiological ligand for receptor tyrosine kinases LTK and ALK (PubMed:29078341, PubMed:29317532). Required for neural crest cell differentiation and iridophore development during embryonic iridophore development and adult stripe development by acting as a receptor for LTK (PubMed:29078341, PubMed:29317532). Also required for iridophore formation in the adult eye (PubMed:29078341).</text>
</comment>
<comment type="subunit">
    <text evidence="1">Homodimer.</text>
</comment>
<comment type="subcellular location">
    <subcellularLocation>
        <location evidence="2">Secreted</location>
    </subcellularLocation>
    <subcellularLocation>
        <location evidence="1">Cell membrane</location>
    </subcellularLocation>
</comment>
<comment type="tissue specificity">
    <text evidence="4">Highly expressed in the swim bladder and single cells of unknown identity in the head.</text>
</comment>
<comment type="disruption phenotype">
    <text evidence="3 4">Reduced number of iridophores in the eye (PubMed:29078341). Fishes lacking alkal2b do not exhibit any defects in trunk iridophores in adults (PubMed:29317532). Fishes lacking both alkal1 and alkal2b show a complete loss of eye iridophores (PubMed:29317532). Fishes lacking alkal1, alkal2a and alkal2b are embryonic lethal and display total loss of iridophores (PubMed:29317532).</text>
</comment>
<comment type="similarity">
    <text evidence="7">Belongs to the ALKAL family.</text>
</comment>
<sequence>MCFALSLSIYKHTGTPPNKCRLNSALKRNRATVRLDIGQRGSLCPPFSMSAVRPPVFIGLLLLILTTGYCKPRDRDETSLLELLMDRVRQTQEHHSEGNTQHPPQIIEHSLETKDVNKVTKSYQHERILEVFPRDLRQKDKFLKHLTGPLYFSPKCSKLFYKLYNNTRDCTIPAYYKRCARLLTRLAGSQRCTEG</sequence>
<protein>
    <recommendedName>
        <fullName evidence="6">ALK and LTK ligand 2b</fullName>
    </recommendedName>
    <alternativeName>
        <fullName evidence="5">Augmentor alpha-2</fullName>
        <shortName evidence="5">AUG-alpha-2</shortName>
    </alternativeName>
</protein>
<evidence type="ECO:0000250" key="1">
    <source>
        <dbReference type="UniProtKB" id="Q6UX46"/>
    </source>
</evidence>
<evidence type="ECO:0000255" key="2"/>
<evidence type="ECO:0000269" key="3">
    <source>
    </source>
</evidence>
<evidence type="ECO:0000269" key="4">
    <source>
    </source>
</evidence>
<evidence type="ECO:0000303" key="5">
    <source>
    </source>
</evidence>
<evidence type="ECO:0000303" key="6">
    <source>
    </source>
</evidence>
<evidence type="ECO:0000305" key="7"/>
<accession>E7FAP8</accession>
<keyword id="KW-1003">Cell membrane</keyword>
<keyword id="KW-0202">Cytokine</keyword>
<keyword id="KW-1015">Disulfide bond</keyword>
<keyword id="KW-0472">Membrane</keyword>
<keyword id="KW-1185">Reference proteome</keyword>
<keyword id="KW-0964">Secreted</keyword>
<keyword id="KW-0732">Signal</keyword>
<gene>
    <name evidence="6" type="primary">alkal2b</name>
</gene>
<name>AKL2B_DANRE</name>
<reference key="1">
    <citation type="journal article" date="2013" name="Nature">
        <title>The zebrafish reference genome sequence and its relationship to the human genome.</title>
        <authorList>
            <person name="Howe K."/>
            <person name="Clark M.D."/>
            <person name="Torroja C.F."/>
            <person name="Torrance J."/>
            <person name="Berthelot C."/>
            <person name="Muffato M."/>
            <person name="Collins J.E."/>
            <person name="Humphray S."/>
            <person name="McLaren K."/>
            <person name="Matthews L."/>
            <person name="McLaren S."/>
            <person name="Sealy I."/>
            <person name="Caccamo M."/>
            <person name="Churcher C."/>
            <person name="Scott C."/>
            <person name="Barrett J.C."/>
            <person name="Koch R."/>
            <person name="Rauch G.J."/>
            <person name="White S."/>
            <person name="Chow W."/>
            <person name="Kilian B."/>
            <person name="Quintais L.T."/>
            <person name="Guerra-Assuncao J.A."/>
            <person name="Zhou Y."/>
            <person name="Gu Y."/>
            <person name="Yen J."/>
            <person name="Vogel J.H."/>
            <person name="Eyre T."/>
            <person name="Redmond S."/>
            <person name="Banerjee R."/>
            <person name="Chi J."/>
            <person name="Fu B."/>
            <person name="Langley E."/>
            <person name="Maguire S.F."/>
            <person name="Laird G.K."/>
            <person name="Lloyd D."/>
            <person name="Kenyon E."/>
            <person name="Donaldson S."/>
            <person name="Sehra H."/>
            <person name="Almeida-King J."/>
            <person name="Loveland J."/>
            <person name="Trevanion S."/>
            <person name="Jones M."/>
            <person name="Quail M."/>
            <person name="Willey D."/>
            <person name="Hunt A."/>
            <person name="Burton J."/>
            <person name="Sims S."/>
            <person name="McLay K."/>
            <person name="Plumb B."/>
            <person name="Davis J."/>
            <person name="Clee C."/>
            <person name="Oliver K."/>
            <person name="Clark R."/>
            <person name="Riddle C."/>
            <person name="Elliot D."/>
            <person name="Threadgold G."/>
            <person name="Harden G."/>
            <person name="Ware D."/>
            <person name="Begum S."/>
            <person name="Mortimore B."/>
            <person name="Kerry G."/>
            <person name="Heath P."/>
            <person name="Phillimore B."/>
            <person name="Tracey A."/>
            <person name="Corby N."/>
            <person name="Dunn M."/>
            <person name="Johnson C."/>
            <person name="Wood J."/>
            <person name="Clark S."/>
            <person name="Pelan S."/>
            <person name="Griffiths G."/>
            <person name="Smith M."/>
            <person name="Glithero R."/>
            <person name="Howden P."/>
            <person name="Barker N."/>
            <person name="Lloyd C."/>
            <person name="Stevens C."/>
            <person name="Harley J."/>
            <person name="Holt K."/>
            <person name="Panagiotidis G."/>
            <person name="Lovell J."/>
            <person name="Beasley H."/>
            <person name="Henderson C."/>
            <person name="Gordon D."/>
            <person name="Auger K."/>
            <person name="Wright D."/>
            <person name="Collins J."/>
            <person name="Raisen C."/>
            <person name="Dyer L."/>
            <person name="Leung K."/>
            <person name="Robertson L."/>
            <person name="Ambridge K."/>
            <person name="Leongamornlert D."/>
            <person name="McGuire S."/>
            <person name="Gilderthorp R."/>
            <person name="Griffiths C."/>
            <person name="Manthravadi D."/>
            <person name="Nichol S."/>
            <person name="Barker G."/>
            <person name="Whitehead S."/>
            <person name="Kay M."/>
            <person name="Brown J."/>
            <person name="Murnane C."/>
            <person name="Gray E."/>
            <person name="Humphries M."/>
            <person name="Sycamore N."/>
            <person name="Barker D."/>
            <person name="Saunders D."/>
            <person name="Wallis J."/>
            <person name="Babbage A."/>
            <person name="Hammond S."/>
            <person name="Mashreghi-Mohammadi M."/>
            <person name="Barr L."/>
            <person name="Martin S."/>
            <person name="Wray P."/>
            <person name="Ellington A."/>
            <person name="Matthews N."/>
            <person name="Ellwood M."/>
            <person name="Woodmansey R."/>
            <person name="Clark G."/>
            <person name="Cooper J."/>
            <person name="Tromans A."/>
            <person name="Grafham D."/>
            <person name="Skuce C."/>
            <person name="Pandian R."/>
            <person name="Andrews R."/>
            <person name="Harrison E."/>
            <person name="Kimberley A."/>
            <person name="Garnett J."/>
            <person name="Fosker N."/>
            <person name="Hall R."/>
            <person name="Garner P."/>
            <person name="Kelly D."/>
            <person name="Bird C."/>
            <person name="Palmer S."/>
            <person name="Gehring I."/>
            <person name="Berger A."/>
            <person name="Dooley C.M."/>
            <person name="Ersan-Urun Z."/>
            <person name="Eser C."/>
            <person name="Geiger H."/>
            <person name="Geisler M."/>
            <person name="Karotki L."/>
            <person name="Kirn A."/>
            <person name="Konantz J."/>
            <person name="Konantz M."/>
            <person name="Oberlander M."/>
            <person name="Rudolph-Geiger S."/>
            <person name="Teucke M."/>
            <person name="Lanz C."/>
            <person name="Raddatz G."/>
            <person name="Osoegawa K."/>
            <person name="Zhu B."/>
            <person name="Rapp A."/>
            <person name="Widaa S."/>
            <person name="Langford C."/>
            <person name="Yang F."/>
            <person name="Schuster S.C."/>
            <person name="Carter N.P."/>
            <person name="Harrow J."/>
            <person name="Ning Z."/>
            <person name="Herrero J."/>
            <person name="Searle S.M."/>
            <person name="Enright A."/>
            <person name="Geisler R."/>
            <person name="Plasterk R.H."/>
            <person name="Lee C."/>
            <person name="Westerfield M."/>
            <person name="de Jong P.J."/>
            <person name="Zon L.I."/>
            <person name="Postlethwait J.H."/>
            <person name="Nusslein-Volhard C."/>
            <person name="Hubbard T.J."/>
            <person name="Roest Crollius H."/>
            <person name="Rogers J."/>
            <person name="Stemple D.L."/>
        </authorList>
    </citation>
    <scope>NUCLEOTIDE SEQUENCE [LARGE SCALE GENOMIC DNA]</scope>
    <source>
        <strain>Tuebingen</strain>
    </source>
</reference>
<reference key="2">
    <citation type="journal article" date="2017" name="Proc. Natl. Acad. Sci. U.S.A.">
        <title>Alk and Ltk ligands are essential for iridophore development in zebrafish mediated by the receptor tyrosine kinase Ltk.</title>
        <authorList>
            <person name="Mo E.S."/>
            <person name="Cheng Q."/>
            <person name="Reshetnyak A.V."/>
            <person name="Schlessinger J."/>
            <person name="Nicoli S."/>
        </authorList>
    </citation>
    <scope>FUNCTION</scope>
    <scope>DISRUPTION PHENOTYPE</scope>
</reference>
<reference key="3">
    <citation type="journal article" date="2018" name="Proc. Natl. Acad. Sci. U.S.A.">
        <title>ALKALs are in vivo ligands for ALK family receptor tyrosine kinases in the neural crest and derived cells.</title>
        <authorList>
            <person name="Fadeev A."/>
            <person name="Mendoza-Garcia P."/>
            <person name="Irion U."/>
            <person name="Guan J."/>
            <person name="Pfeifer K."/>
            <person name="Wiessner S."/>
            <person name="Serluca F."/>
            <person name="Singh A.P."/>
            <person name="Nuesslein-Volhard C."/>
            <person name="Palmer R.H."/>
        </authorList>
    </citation>
    <scope>FUNCTION</scope>
    <scope>TISSUE SPECIFICITY</scope>
    <scope>DISRUPTION PHENOTYPE</scope>
</reference>
<dbReference type="EMBL" id="BX072551">
    <property type="status" value="NOT_ANNOTATED_CDS"/>
    <property type="molecule type" value="Genomic_DNA"/>
</dbReference>
<dbReference type="RefSeq" id="NP_001411009.1">
    <property type="nucleotide sequence ID" value="NM_001424080.1"/>
</dbReference>
<dbReference type="RefSeq" id="XP_002665250.2">
    <property type="nucleotide sequence ID" value="XM_002665204.4"/>
</dbReference>
<dbReference type="SMR" id="E7FAP8"/>
<dbReference type="FunCoup" id="E7FAP8">
    <property type="interactions" value="462"/>
</dbReference>
<dbReference type="STRING" id="7955.ENSDARP00000129102"/>
<dbReference type="PaxDb" id="7955-ENSDARP00000129102"/>
<dbReference type="Ensembl" id="ENSDART00000156509">
    <property type="protein sequence ID" value="ENSDARP00000129102"/>
    <property type="gene ID" value="ENSDARG00000042815"/>
</dbReference>
<dbReference type="GeneID" id="100329254"/>
<dbReference type="eggNOG" id="ENOG502S2JY">
    <property type="taxonomic scope" value="Eukaryota"/>
</dbReference>
<dbReference type="HOGENOM" id="CLU_120534_0_0_1"/>
<dbReference type="InParanoid" id="E7FAP8"/>
<dbReference type="OMA" id="SPMCMER"/>
<dbReference type="OrthoDB" id="9807651at2759"/>
<dbReference type="PhylomeDB" id="E7FAP8"/>
<dbReference type="TreeFam" id="TF333390"/>
<dbReference type="Reactome" id="R-DRE-201556">
    <property type="pathway name" value="Signaling by ALK"/>
</dbReference>
<dbReference type="Reactome" id="R-DRE-9842663">
    <property type="pathway name" value="Signaling by LTK"/>
</dbReference>
<dbReference type="PRO" id="PR:E7FAP8"/>
<dbReference type="Proteomes" id="UP000000437">
    <property type="component" value="Chromosome 17"/>
</dbReference>
<dbReference type="Bgee" id="ENSDARG00000042815">
    <property type="expression patterns" value="Expressed in swim bladder and 7 other cell types or tissues"/>
</dbReference>
<dbReference type="GO" id="GO:0005615">
    <property type="term" value="C:extracellular space"/>
    <property type="evidence" value="ECO:0007669"/>
    <property type="project" value="UniProtKB-KW"/>
</dbReference>
<dbReference type="GO" id="GO:0005886">
    <property type="term" value="C:plasma membrane"/>
    <property type="evidence" value="ECO:0007669"/>
    <property type="project" value="UniProtKB-SubCell"/>
</dbReference>
<dbReference type="GO" id="GO:0005125">
    <property type="term" value="F:cytokine activity"/>
    <property type="evidence" value="ECO:0000314"/>
    <property type="project" value="UniProtKB"/>
</dbReference>
<dbReference type="GO" id="GO:0030298">
    <property type="term" value="F:receptor signaling protein tyrosine kinase activator activity"/>
    <property type="evidence" value="ECO:0000314"/>
    <property type="project" value="UniProtKB"/>
</dbReference>
<dbReference type="GO" id="GO:0030971">
    <property type="term" value="F:receptor tyrosine kinase binding"/>
    <property type="evidence" value="ECO:0000318"/>
    <property type="project" value="GO_Central"/>
</dbReference>
<dbReference type="GO" id="GO:0050935">
    <property type="term" value="P:iridophore differentiation"/>
    <property type="evidence" value="ECO:0000315"/>
    <property type="project" value="ZFIN"/>
</dbReference>
<dbReference type="GO" id="GO:0070374">
    <property type="term" value="P:positive regulation of ERK1 and ERK2 cascade"/>
    <property type="evidence" value="ECO:0000318"/>
    <property type="project" value="GO_Central"/>
</dbReference>
<dbReference type="GO" id="GO:0070378">
    <property type="term" value="P:positive regulation of ERK5 cascade"/>
    <property type="evidence" value="ECO:0000318"/>
    <property type="project" value="GO_Central"/>
</dbReference>
<dbReference type="InterPro" id="IPR029364">
    <property type="entry name" value="ALKL1/2"/>
</dbReference>
<dbReference type="PANTHER" id="PTHR28676:SF2">
    <property type="entry name" value="ALK AND LTK LIGAND 2"/>
    <property type="match status" value="1"/>
</dbReference>
<dbReference type="PANTHER" id="PTHR28676">
    <property type="entry name" value="ALK AND LTK LIGAND 2-RELATED"/>
    <property type="match status" value="1"/>
</dbReference>
<dbReference type="Pfam" id="PF15129">
    <property type="entry name" value="ALKL1_2"/>
    <property type="match status" value="1"/>
</dbReference>
<organism>
    <name type="scientific">Danio rerio</name>
    <name type="common">Zebrafish</name>
    <name type="synonym">Brachydanio rerio</name>
    <dbReference type="NCBI Taxonomy" id="7955"/>
    <lineage>
        <taxon>Eukaryota</taxon>
        <taxon>Metazoa</taxon>
        <taxon>Chordata</taxon>
        <taxon>Craniata</taxon>
        <taxon>Vertebrata</taxon>
        <taxon>Euteleostomi</taxon>
        <taxon>Actinopterygii</taxon>
        <taxon>Neopterygii</taxon>
        <taxon>Teleostei</taxon>
        <taxon>Ostariophysi</taxon>
        <taxon>Cypriniformes</taxon>
        <taxon>Danionidae</taxon>
        <taxon>Danioninae</taxon>
        <taxon>Danio</taxon>
    </lineage>
</organism>
<feature type="signal peptide" evidence="2">
    <location>
        <begin position="1"/>
        <end status="unknown"/>
    </location>
</feature>
<feature type="chain" id="PRO_0000455466" description="ALK and LTK ligand 2b">
    <location>
        <begin status="unknown"/>
        <end position="195"/>
    </location>
</feature>
<feature type="disulfide bond" evidence="1">
    <location>
        <begin position="156"/>
        <end position="192"/>
    </location>
</feature>
<feature type="disulfide bond" evidence="1">
    <location>
        <begin position="170"/>
        <end position="179"/>
    </location>
</feature>